<gene>
    <name type="primary">srtA</name>
</gene>
<feature type="propeptide" id="PRO_0000017138">
    <location>
        <begin position="1"/>
        <end position="24"/>
    </location>
</feature>
<feature type="peptide" id="PRO_0000017139" description="Lantibiotic streptin">
    <location>
        <begin position="25"/>
        <end position="46"/>
    </location>
</feature>
<name>SRTA_STRPY</name>
<reference key="1">
    <citation type="journal article" date="2001" name="J. Biochem.">
        <title>New gene cluster for lantibiotic streptin possibly involved in streptolysin S formation.</title>
        <authorList>
            <person name="Karaya K."/>
            <person name="Shimizu T."/>
            <person name="Taketo A."/>
        </authorList>
    </citation>
    <scope>NUCLEOTIDE SEQUENCE [GENOMIC DNA]</scope>
    <source>
        <strain>BL-T</strain>
    </source>
</reference>
<reference key="2">
    <citation type="journal article" date="2003" name="Appl. Environ. Microbiol.">
        <title>Purification and characterization of streptin, a type A1 lantibiotic produced by Streptococcus pyogenes.</title>
        <authorList>
            <person name="Wescombe P.A."/>
            <person name="Tagg J.R."/>
        </authorList>
    </citation>
    <scope>PROTEIN SEQUENCE OF 21-29</scope>
    <scope>CHARACTERIZATION OF ANTIBIOTIC ACTIVITY</scope>
    <source>
        <strain>M25</strain>
    </source>
</reference>
<evidence type="ECO:0000250" key="1"/>
<evidence type="ECO:0000305" key="2"/>
<proteinExistence type="evidence at protein level"/>
<sequence>MNNTIKDFDLDLKTNKKDTATPYVGSRYLCTPGSCWKLVCFTTTVK</sequence>
<keyword id="KW-0044">Antibiotic</keyword>
<keyword id="KW-0929">Antimicrobial</keyword>
<keyword id="KW-0078">Bacteriocin</keyword>
<keyword id="KW-0903">Direct protein sequencing</keyword>
<keyword id="KW-0425">Lantibiotic</keyword>
<protein>
    <recommendedName>
        <fullName>Lantibiotic streptin</fullName>
    </recommendedName>
</protein>
<organism>
    <name type="scientific">Streptococcus pyogenes</name>
    <dbReference type="NCBI Taxonomy" id="1314"/>
    <lineage>
        <taxon>Bacteria</taxon>
        <taxon>Bacillati</taxon>
        <taxon>Bacillota</taxon>
        <taxon>Bacilli</taxon>
        <taxon>Lactobacillales</taxon>
        <taxon>Streptococcaceae</taxon>
        <taxon>Streptococcus</taxon>
    </lineage>
</organism>
<comment type="function">
    <text>Lanthionine-containing peptide antibiotic (lantibiotic) active on certain Gram-positive bacteria. The bactericidal activity of lantibiotics is based on depolarization of energized bacterial cytoplasmic membranes, initiated by the formation of aqueous transmembrane pores.</text>
</comment>
<comment type="induction">
    <text>Induces its own expression in at least strain M25.</text>
</comment>
<comment type="PTM">
    <text evidence="1">Maturation of lantibiotics involves the enzymatic conversion of Thr, and Ser into dehydrated AA and the formation of thioether bonds with cysteine. This is followed by membrane translocation and cleavage of the modified precursor (By similarity).</text>
</comment>
<comment type="miscellaneous">
    <text>A longer form (streptin 2, with three more amino acids at the N-terminus) is probably due to incomplete processing. Other forms also exist, some of which are due to differing levels of dehydration.</text>
</comment>
<comment type="similarity">
    <text evidence="2">Belongs to the type A lantibiotic family.</text>
</comment>
<dbReference type="EMBL" id="AB030831">
    <property type="protein sequence ID" value="BAB08162.1"/>
    <property type="molecule type" value="Genomic_DNA"/>
</dbReference>
<dbReference type="RefSeq" id="WP_002984803.1">
    <property type="nucleotide sequence ID" value="NZ_WXZK01000013.1"/>
</dbReference>
<dbReference type="SMR" id="P0C0H8"/>
<dbReference type="STRING" id="1314.SD89_04040"/>
<dbReference type="GO" id="GO:0005576">
    <property type="term" value="C:extracellular region"/>
    <property type="evidence" value="ECO:0007669"/>
    <property type="project" value="InterPro"/>
</dbReference>
<dbReference type="GO" id="GO:0005102">
    <property type="term" value="F:signaling receptor binding"/>
    <property type="evidence" value="ECO:0007669"/>
    <property type="project" value="UniProtKB-KW"/>
</dbReference>
<dbReference type="GO" id="GO:0042742">
    <property type="term" value="P:defense response to bacterium"/>
    <property type="evidence" value="ECO:0007669"/>
    <property type="project" value="UniProtKB-KW"/>
</dbReference>
<dbReference type="GO" id="GO:0031640">
    <property type="term" value="P:killing of cells of another organism"/>
    <property type="evidence" value="ECO:0007669"/>
    <property type="project" value="UniProtKB-KW"/>
</dbReference>
<dbReference type="InterPro" id="IPR006079">
    <property type="entry name" value="Lantibiotic_typ-A_Bacillales"/>
</dbReference>
<dbReference type="NCBIfam" id="NF038155">
    <property type="entry name" value="lanthi_I_FDLD"/>
    <property type="match status" value="1"/>
</dbReference>
<dbReference type="NCBIfam" id="TIGR03731">
    <property type="entry name" value="lantibio_gallid"/>
    <property type="match status" value="1"/>
</dbReference>
<accession>P0C0H8</accession>
<accession>Q9FDV1</accession>